<reference key="1">
    <citation type="journal article" date="1996" name="J. Bacteriol.">
        <title>Dra-nupC-pdp operon of Bacillus subtilis: nucleotide sequence, induction by deoxyribonucleosides, and transcriptional regulation by the deoR-encoded DeoR repressor protein.</title>
        <authorList>
            <person name="Saxild H.H."/>
            <person name="Andersen L.N."/>
            <person name="Hammer K."/>
        </authorList>
    </citation>
    <scope>NUCLEOTIDE SEQUENCE [GENOMIC DNA]</scope>
    <scope>FUNCTION</scope>
    <scope>INDUCTION</scope>
    <source>
        <strain>168</strain>
    </source>
</reference>
<reference key="2">
    <citation type="journal article" date="1995" name="DNA Res.">
        <title>Cloning and sequencing of a 23-kb region of the Bacillus subtilis genome between the iol and hut operons.</title>
        <authorList>
            <person name="Yoshida K."/>
            <person name="Fujimyra M."/>
            <person name="Yanai N."/>
            <person name="Fujita Y."/>
        </authorList>
    </citation>
    <scope>NUCLEOTIDE SEQUENCE [GENOMIC DNA]</scope>
    <source>
        <strain>168 / BGSC1A1</strain>
    </source>
</reference>
<reference key="3">
    <citation type="journal article" date="1997" name="Nature">
        <title>The complete genome sequence of the Gram-positive bacterium Bacillus subtilis.</title>
        <authorList>
            <person name="Kunst F."/>
            <person name="Ogasawara N."/>
            <person name="Moszer I."/>
            <person name="Albertini A.M."/>
            <person name="Alloni G."/>
            <person name="Azevedo V."/>
            <person name="Bertero M.G."/>
            <person name="Bessieres P."/>
            <person name="Bolotin A."/>
            <person name="Borchert S."/>
            <person name="Borriss R."/>
            <person name="Boursier L."/>
            <person name="Brans A."/>
            <person name="Braun M."/>
            <person name="Brignell S.C."/>
            <person name="Bron S."/>
            <person name="Brouillet S."/>
            <person name="Bruschi C.V."/>
            <person name="Caldwell B."/>
            <person name="Capuano V."/>
            <person name="Carter N.M."/>
            <person name="Choi S.-K."/>
            <person name="Codani J.-J."/>
            <person name="Connerton I.F."/>
            <person name="Cummings N.J."/>
            <person name="Daniel R.A."/>
            <person name="Denizot F."/>
            <person name="Devine K.M."/>
            <person name="Duesterhoeft A."/>
            <person name="Ehrlich S.D."/>
            <person name="Emmerson P.T."/>
            <person name="Entian K.-D."/>
            <person name="Errington J."/>
            <person name="Fabret C."/>
            <person name="Ferrari E."/>
            <person name="Foulger D."/>
            <person name="Fritz C."/>
            <person name="Fujita M."/>
            <person name="Fujita Y."/>
            <person name="Fuma S."/>
            <person name="Galizzi A."/>
            <person name="Galleron N."/>
            <person name="Ghim S.-Y."/>
            <person name="Glaser P."/>
            <person name="Goffeau A."/>
            <person name="Golightly E.J."/>
            <person name="Grandi G."/>
            <person name="Guiseppi G."/>
            <person name="Guy B.J."/>
            <person name="Haga K."/>
            <person name="Haiech J."/>
            <person name="Harwood C.R."/>
            <person name="Henaut A."/>
            <person name="Hilbert H."/>
            <person name="Holsappel S."/>
            <person name="Hosono S."/>
            <person name="Hullo M.-F."/>
            <person name="Itaya M."/>
            <person name="Jones L.-M."/>
            <person name="Joris B."/>
            <person name="Karamata D."/>
            <person name="Kasahara Y."/>
            <person name="Klaerr-Blanchard M."/>
            <person name="Klein C."/>
            <person name="Kobayashi Y."/>
            <person name="Koetter P."/>
            <person name="Koningstein G."/>
            <person name="Krogh S."/>
            <person name="Kumano M."/>
            <person name="Kurita K."/>
            <person name="Lapidus A."/>
            <person name="Lardinois S."/>
            <person name="Lauber J."/>
            <person name="Lazarevic V."/>
            <person name="Lee S.-M."/>
            <person name="Levine A."/>
            <person name="Liu H."/>
            <person name="Masuda S."/>
            <person name="Mauel C."/>
            <person name="Medigue C."/>
            <person name="Medina N."/>
            <person name="Mellado R.P."/>
            <person name="Mizuno M."/>
            <person name="Moestl D."/>
            <person name="Nakai S."/>
            <person name="Noback M."/>
            <person name="Noone D."/>
            <person name="O'Reilly M."/>
            <person name="Ogawa K."/>
            <person name="Ogiwara A."/>
            <person name="Oudega B."/>
            <person name="Park S.-H."/>
            <person name="Parro V."/>
            <person name="Pohl T.M."/>
            <person name="Portetelle D."/>
            <person name="Porwollik S."/>
            <person name="Prescott A.M."/>
            <person name="Presecan E."/>
            <person name="Pujic P."/>
            <person name="Purnelle B."/>
            <person name="Rapoport G."/>
            <person name="Rey M."/>
            <person name="Reynolds S."/>
            <person name="Rieger M."/>
            <person name="Rivolta C."/>
            <person name="Rocha E."/>
            <person name="Roche B."/>
            <person name="Rose M."/>
            <person name="Sadaie Y."/>
            <person name="Sato T."/>
            <person name="Scanlan E."/>
            <person name="Schleich S."/>
            <person name="Schroeter R."/>
            <person name="Scoffone F."/>
            <person name="Sekiguchi J."/>
            <person name="Sekowska A."/>
            <person name="Seror S.J."/>
            <person name="Serror P."/>
            <person name="Shin B.-S."/>
            <person name="Soldo B."/>
            <person name="Sorokin A."/>
            <person name="Tacconi E."/>
            <person name="Takagi T."/>
            <person name="Takahashi H."/>
            <person name="Takemaru K."/>
            <person name="Takeuchi M."/>
            <person name="Tamakoshi A."/>
            <person name="Tanaka T."/>
            <person name="Terpstra P."/>
            <person name="Tognoni A."/>
            <person name="Tosato V."/>
            <person name="Uchiyama S."/>
            <person name="Vandenbol M."/>
            <person name="Vannier F."/>
            <person name="Vassarotti A."/>
            <person name="Viari A."/>
            <person name="Wambutt R."/>
            <person name="Wedler E."/>
            <person name="Wedler H."/>
            <person name="Weitzenegger T."/>
            <person name="Winters P."/>
            <person name="Wipat A."/>
            <person name="Yamamoto H."/>
            <person name="Yamane K."/>
            <person name="Yasumoto K."/>
            <person name="Yata K."/>
            <person name="Yoshida K."/>
            <person name="Yoshikawa H.-F."/>
            <person name="Zumstein E."/>
            <person name="Yoshikawa H."/>
            <person name="Danchin A."/>
        </authorList>
    </citation>
    <scope>NUCLEOTIDE SEQUENCE [LARGE SCALE GENOMIC DNA]</scope>
    <source>
        <strain>168</strain>
    </source>
</reference>
<reference key="4">
    <citation type="journal article" date="2009" name="Microbiology">
        <title>From a consortium sequence to a unified sequence: the Bacillus subtilis 168 reference genome a decade later.</title>
        <authorList>
            <person name="Barbe V."/>
            <person name="Cruveiller S."/>
            <person name="Kunst F."/>
            <person name="Lenoble P."/>
            <person name="Meurice G."/>
            <person name="Sekowska A."/>
            <person name="Vallenet D."/>
            <person name="Wang T."/>
            <person name="Moszer I."/>
            <person name="Medigue C."/>
            <person name="Danchin A."/>
        </authorList>
    </citation>
    <scope>SEQUENCE REVISION TO 16</scope>
</reference>
<sequence>MKYLIGIIGLIVFLGLAWIASSGKKRIKIRPIVVMLILQFILGYILLNTGIGNFLVGGFAKGFGYLLEYAAEGINFVFGGLVNADQTTFFMNVLLPIVFISALIGILQKWKVLPFIIRYIGLALSKVNGMGRLESYNAVASAILGQSEVFISLKKELGLLNQQRLYTLCASAMSTVSMSIVGAYMTMLKPEYVVTALVLNLFGGFIIASIINPYEVAKEEDMLRVEEEEKQSFFEVLGEYILDGFKVAVVVAAMLIGFVAIIALINGIFNAVFGISFQGILGYVFAPFAFLVGIPWNEAVNAGSIMATKMVSNEFVAMTSLTQNGFHFSGRTTAIVSVFLVSFANFSSIGIIAGAVKGLNEKQGNVVARFGLKLLYGATLVSFLSAAIVGLIY</sequence>
<evidence type="ECO:0000255" key="1"/>
<evidence type="ECO:0000269" key="2">
    <source>
    </source>
</evidence>
<evidence type="ECO:0000303" key="3">
    <source>
    </source>
</evidence>
<evidence type="ECO:0000305" key="4"/>
<keyword id="KW-1003">Cell membrane</keyword>
<keyword id="KW-0472">Membrane</keyword>
<keyword id="KW-1185">Reference proteome</keyword>
<keyword id="KW-0812">Transmembrane</keyword>
<keyword id="KW-1133">Transmembrane helix</keyword>
<keyword id="KW-0813">Transport</keyword>
<proteinExistence type="evidence at transcript level"/>
<organism>
    <name type="scientific">Bacillus subtilis (strain 168)</name>
    <dbReference type="NCBI Taxonomy" id="224308"/>
    <lineage>
        <taxon>Bacteria</taxon>
        <taxon>Bacillati</taxon>
        <taxon>Bacillota</taxon>
        <taxon>Bacilli</taxon>
        <taxon>Bacillales</taxon>
        <taxon>Bacillaceae</taxon>
        <taxon>Bacillus</taxon>
    </lineage>
</organism>
<dbReference type="EMBL" id="X82174">
    <property type="protein sequence ID" value="CAA57663.1"/>
    <property type="molecule type" value="Genomic_DNA"/>
</dbReference>
<dbReference type="EMBL" id="D45912">
    <property type="protein sequence ID" value="BAA08338.1"/>
    <property type="molecule type" value="Genomic_DNA"/>
</dbReference>
<dbReference type="EMBL" id="AL009126">
    <property type="protein sequence ID" value="CAB15977.2"/>
    <property type="molecule type" value="Genomic_DNA"/>
</dbReference>
<dbReference type="PIR" id="S78769">
    <property type="entry name" value="S49456"/>
</dbReference>
<dbReference type="RefSeq" id="NP_391820.2">
    <property type="nucleotide sequence ID" value="NC_000964.3"/>
</dbReference>
<dbReference type="RefSeq" id="WP_003244143.1">
    <property type="nucleotide sequence ID" value="NZ_OZ025638.1"/>
</dbReference>
<dbReference type="SMR" id="P39141"/>
<dbReference type="FunCoup" id="P39141">
    <property type="interactions" value="19"/>
</dbReference>
<dbReference type="STRING" id="224308.BSU39410"/>
<dbReference type="TCDB" id="2.A.41.1.2">
    <property type="family name" value="the concentrative nucleoside transporter (cnt) family"/>
</dbReference>
<dbReference type="jPOST" id="P39141"/>
<dbReference type="PaxDb" id="224308-BSU39410"/>
<dbReference type="EnsemblBacteria" id="CAB15977">
    <property type="protein sequence ID" value="CAB15977"/>
    <property type="gene ID" value="BSU_39410"/>
</dbReference>
<dbReference type="GeneID" id="86871422"/>
<dbReference type="GeneID" id="937534"/>
<dbReference type="KEGG" id="bsu:BSU39410"/>
<dbReference type="PATRIC" id="fig|224308.179.peg.4266"/>
<dbReference type="eggNOG" id="COG1972">
    <property type="taxonomic scope" value="Bacteria"/>
</dbReference>
<dbReference type="InParanoid" id="P39141"/>
<dbReference type="OrthoDB" id="9766455at2"/>
<dbReference type="PhylomeDB" id="P39141"/>
<dbReference type="BioCyc" id="BSUB:BSU39410-MONOMER"/>
<dbReference type="Proteomes" id="UP000001570">
    <property type="component" value="Chromosome"/>
</dbReference>
<dbReference type="GO" id="GO:0005886">
    <property type="term" value="C:plasma membrane"/>
    <property type="evidence" value="ECO:0000318"/>
    <property type="project" value="GO_Central"/>
</dbReference>
<dbReference type="GO" id="GO:0005337">
    <property type="term" value="F:nucleoside transmembrane transporter activity"/>
    <property type="evidence" value="ECO:0000318"/>
    <property type="project" value="GO_Central"/>
</dbReference>
<dbReference type="GO" id="GO:0015293">
    <property type="term" value="F:symporter activity"/>
    <property type="evidence" value="ECO:0000318"/>
    <property type="project" value="GO_Central"/>
</dbReference>
<dbReference type="GO" id="GO:1901642">
    <property type="term" value="P:nucleoside transmembrane transport"/>
    <property type="evidence" value="ECO:0000318"/>
    <property type="project" value="GO_Central"/>
</dbReference>
<dbReference type="InterPro" id="IPR008276">
    <property type="entry name" value="C_nuclsd_transpt"/>
</dbReference>
<dbReference type="InterPro" id="IPR018270">
    <property type="entry name" value="C_nuclsd_transpt_met_bac"/>
</dbReference>
<dbReference type="InterPro" id="IPR011657">
    <property type="entry name" value="CNT_C_dom"/>
</dbReference>
<dbReference type="InterPro" id="IPR002668">
    <property type="entry name" value="CNT_N_dom"/>
</dbReference>
<dbReference type="InterPro" id="IPR011642">
    <property type="entry name" value="Gate_dom"/>
</dbReference>
<dbReference type="NCBIfam" id="TIGR00804">
    <property type="entry name" value="nupC"/>
    <property type="match status" value="1"/>
</dbReference>
<dbReference type="PANTHER" id="PTHR10590:SF13">
    <property type="entry name" value="NUCLEOSIDE PERMEASE NUPC"/>
    <property type="match status" value="1"/>
</dbReference>
<dbReference type="PANTHER" id="PTHR10590">
    <property type="entry name" value="SODIUM/NUCLEOSIDE COTRANSPORTER"/>
    <property type="match status" value="1"/>
</dbReference>
<dbReference type="Pfam" id="PF07670">
    <property type="entry name" value="Gate"/>
    <property type="match status" value="1"/>
</dbReference>
<dbReference type="Pfam" id="PF07662">
    <property type="entry name" value="Nucleos_tra2_C"/>
    <property type="match status" value="1"/>
</dbReference>
<dbReference type="Pfam" id="PF01773">
    <property type="entry name" value="Nucleos_tra2_N"/>
    <property type="match status" value="1"/>
</dbReference>
<name>NUPC_BACSU</name>
<comment type="function">
    <text evidence="2">Transport of the pyrimidine nucleoside uridine.</text>
</comment>
<comment type="subcellular location">
    <subcellularLocation>
        <location evidence="4">Cell membrane</location>
        <topology evidence="1">Multi-pass membrane protein</topology>
    </subcellularLocation>
</comment>
<comment type="induction">
    <text evidence="2">Induced by deoxyadenosine and thymidine. Repressed by DeoR and glucose.</text>
</comment>
<comment type="similarity">
    <text evidence="4">Belongs to the concentrative nucleoside transporter (CNT) (TC 2.A.41) family.</text>
</comment>
<gene>
    <name evidence="3" type="primary">nupC</name>
    <name type="ordered locus">BSU39410</name>
</gene>
<accession>P39141</accession>
<accession>O32288</accession>
<feature type="chain" id="PRO_0000070453" description="Nucleoside permease NupC">
    <location>
        <begin position="1"/>
        <end position="393"/>
    </location>
</feature>
<feature type="transmembrane region" description="Helical" evidence="1">
    <location>
        <begin position="3"/>
        <end position="23"/>
    </location>
</feature>
<feature type="transmembrane region" description="Helical" evidence="1">
    <location>
        <begin position="32"/>
        <end position="52"/>
    </location>
</feature>
<feature type="transmembrane region" description="Helical" evidence="1">
    <location>
        <begin position="87"/>
        <end position="107"/>
    </location>
</feature>
<feature type="transmembrane region" description="Helical" evidence="1">
    <location>
        <begin position="168"/>
        <end position="188"/>
    </location>
</feature>
<feature type="transmembrane region" description="Helical" evidence="1">
    <location>
        <begin position="191"/>
        <end position="211"/>
    </location>
</feature>
<feature type="transmembrane region" description="Helical" evidence="1">
    <location>
        <begin position="249"/>
        <end position="269"/>
    </location>
</feature>
<feature type="transmembrane region" description="Helical" evidence="1">
    <location>
        <begin position="272"/>
        <end position="292"/>
    </location>
</feature>
<feature type="transmembrane region" description="Helical" evidence="1">
    <location>
        <begin position="334"/>
        <end position="354"/>
    </location>
</feature>
<feature type="transmembrane region" description="Helical" evidence="1">
    <location>
        <begin position="372"/>
        <end position="392"/>
    </location>
</feature>
<feature type="sequence conflict" description="In Ref. 1; CAA57663." evidence="4" ref="1">
    <original>L</original>
    <variation>F</variation>
    <location>
        <position position="16"/>
    </location>
</feature>
<feature type="sequence conflict" description="In Ref. 1; CAA57663." evidence="4" ref="1">
    <original>SI</original>
    <variation>RL</variation>
    <location>
        <begin position="304"/>
        <end position="305"/>
    </location>
</feature>
<feature type="sequence conflict" description="In Ref. 1; CAA57663." evidence="4" ref="1">
    <original>S</original>
    <variation>V</variation>
    <location>
        <position position="320"/>
    </location>
</feature>
<protein>
    <recommendedName>
        <fullName evidence="4">Nucleoside permease NupC</fullName>
    </recommendedName>
</protein>